<sequence>MKAVIILGLVLLSVTVQGKIFERCELARTLKRLGLDGYRGISLANWVCLAKWESNYNTQATNYNPGDQSTDYGIFQINSHYWCNNGKTPGAVNACHISCNALLQDNIADAVTCAKRVVSDPQGIRAWVAWRNHCQNRDVSQYVQGCGV</sequence>
<dbReference type="EC" id="3.2.1.17"/>
<dbReference type="EMBL" id="X60236">
    <property type="protein sequence ID" value="CAA42796.1"/>
    <property type="molecule type" value="mRNA"/>
</dbReference>
<dbReference type="RefSeq" id="NP_001095203.1">
    <property type="nucleotide sequence ID" value="NM_001101733.1"/>
</dbReference>
<dbReference type="SMR" id="P30201"/>
<dbReference type="FunCoup" id="P30201">
    <property type="interactions" value="88"/>
</dbReference>
<dbReference type="STRING" id="9544.ENSMMUP00000047515"/>
<dbReference type="CAZy" id="GH22">
    <property type="family name" value="Glycoside Hydrolase Family 22"/>
</dbReference>
<dbReference type="PaxDb" id="9544-ENSMMUP00000011770"/>
<dbReference type="Ensembl" id="ENSMMUT00000056068.2">
    <property type="protein sequence ID" value="ENSMMUP00000047515.1"/>
    <property type="gene ID" value="ENSMMUG00000008987.4"/>
</dbReference>
<dbReference type="GeneID" id="718361"/>
<dbReference type="KEGG" id="mcc:718361"/>
<dbReference type="CTD" id="4069"/>
<dbReference type="VEuPathDB" id="HostDB:ENSMMUG00000008987"/>
<dbReference type="VGNC" id="VGNC:74466">
    <property type="gene designation" value="LYZ"/>
</dbReference>
<dbReference type="eggNOG" id="ENOG502S1S1">
    <property type="taxonomic scope" value="Eukaryota"/>
</dbReference>
<dbReference type="GeneTree" id="ENSGT00940000153832"/>
<dbReference type="HOGENOM" id="CLU_111620_0_1_1"/>
<dbReference type="InParanoid" id="P30201"/>
<dbReference type="OMA" id="VYERCEF"/>
<dbReference type="OrthoDB" id="17373at2759"/>
<dbReference type="TreeFam" id="TF324882"/>
<dbReference type="Proteomes" id="UP000006718">
    <property type="component" value="Chromosome 11"/>
</dbReference>
<dbReference type="Bgee" id="ENSMMUG00000008987">
    <property type="expression patterns" value="Expressed in olfactory segment of nasal mucosa and 23 other cell types or tissues"/>
</dbReference>
<dbReference type="ExpressionAtlas" id="P30201">
    <property type="expression patterns" value="baseline"/>
</dbReference>
<dbReference type="GO" id="GO:0005615">
    <property type="term" value="C:extracellular space"/>
    <property type="evidence" value="ECO:0007669"/>
    <property type="project" value="Ensembl"/>
</dbReference>
<dbReference type="GO" id="GO:0042802">
    <property type="term" value="F:identical protein binding"/>
    <property type="evidence" value="ECO:0007669"/>
    <property type="project" value="Ensembl"/>
</dbReference>
<dbReference type="GO" id="GO:0003796">
    <property type="term" value="F:lysozyme activity"/>
    <property type="evidence" value="ECO:0000318"/>
    <property type="project" value="GO_Central"/>
</dbReference>
<dbReference type="GO" id="GO:0050829">
    <property type="term" value="P:defense response to Gram-negative bacterium"/>
    <property type="evidence" value="ECO:0000318"/>
    <property type="project" value="GO_Central"/>
</dbReference>
<dbReference type="GO" id="GO:0050830">
    <property type="term" value="P:defense response to Gram-positive bacterium"/>
    <property type="evidence" value="ECO:0000318"/>
    <property type="project" value="GO_Central"/>
</dbReference>
<dbReference type="GO" id="GO:0031640">
    <property type="term" value="P:killing of cells of another organism"/>
    <property type="evidence" value="ECO:0007669"/>
    <property type="project" value="UniProtKB-KW"/>
</dbReference>
<dbReference type="CDD" id="cd16897">
    <property type="entry name" value="LYZ_C"/>
    <property type="match status" value="1"/>
</dbReference>
<dbReference type="FunFam" id="1.10.530.10:FF:000001">
    <property type="entry name" value="Lysozyme C"/>
    <property type="match status" value="1"/>
</dbReference>
<dbReference type="Gene3D" id="1.10.530.10">
    <property type="match status" value="1"/>
</dbReference>
<dbReference type="InterPro" id="IPR001916">
    <property type="entry name" value="Glyco_hydro_22"/>
</dbReference>
<dbReference type="InterPro" id="IPR019799">
    <property type="entry name" value="Glyco_hydro_22_CS"/>
</dbReference>
<dbReference type="InterPro" id="IPR000974">
    <property type="entry name" value="Glyco_hydro_22_lys"/>
</dbReference>
<dbReference type="InterPro" id="IPR023346">
    <property type="entry name" value="Lysozyme-like_dom_sf"/>
</dbReference>
<dbReference type="PANTHER" id="PTHR11407">
    <property type="entry name" value="LYSOZYME C"/>
    <property type="match status" value="1"/>
</dbReference>
<dbReference type="PANTHER" id="PTHR11407:SF28">
    <property type="entry name" value="LYSOZYME C"/>
    <property type="match status" value="1"/>
</dbReference>
<dbReference type="Pfam" id="PF00062">
    <property type="entry name" value="Lys"/>
    <property type="match status" value="1"/>
</dbReference>
<dbReference type="PRINTS" id="PR00137">
    <property type="entry name" value="LYSOZYME"/>
</dbReference>
<dbReference type="PRINTS" id="PR00135">
    <property type="entry name" value="LYZLACT"/>
</dbReference>
<dbReference type="SMART" id="SM00263">
    <property type="entry name" value="LYZ1"/>
    <property type="match status" value="1"/>
</dbReference>
<dbReference type="SUPFAM" id="SSF53955">
    <property type="entry name" value="Lysozyme-like"/>
    <property type="match status" value="1"/>
</dbReference>
<dbReference type="PROSITE" id="PS00128">
    <property type="entry name" value="GLYCOSYL_HYDROL_F22_1"/>
    <property type="match status" value="1"/>
</dbReference>
<dbReference type="PROSITE" id="PS51348">
    <property type="entry name" value="GLYCOSYL_HYDROL_F22_2"/>
    <property type="match status" value="1"/>
</dbReference>
<name>LYSC_MACMU</name>
<protein>
    <recommendedName>
        <fullName>Lysozyme C</fullName>
        <ecNumber>3.2.1.17</ecNumber>
    </recommendedName>
    <alternativeName>
        <fullName>1,4-beta-N-acetylmuramidase C</fullName>
    </alternativeName>
</protein>
<evidence type="ECO:0000250" key="1"/>
<evidence type="ECO:0000255" key="2">
    <source>
        <dbReference type="PROSITE-ProRule" id="PRU00680"/>
    </source>
</evidence>
<reference key="1">
    <citation type="journal article" date="1991" name="J. Mol. Evol.">
        <title>Stomach lysozyme gene of the langur monkey: tests for convergence and positive selection.</title>
        <authorList>
            <person name="Swanson K.W."/>
            <person name="Irwin D.M."/>
            <person name="Wilson A.C."/>
        </authorList>
    </citation>
    <scope>NUCLEOTIDE SEQUENCE [MRNA]</scope>
    <source>
        <tissue>Mammary gland</tissue>
    </source>
</reference>
<organism>
    <name type="scientific">Macaca mulatta</name>
    <name type="common">Rhesus macaque</name>
    <dbReference type="NCBI Taxonomy" id="9544"/>
    <lineage>
        <taxon>Eukaryota</taxon>
        <taxon>Metazoa</taxon>
        <taxon>Chordata</taxon>
        <taxon>Craniata</taxon>
        <taxon>Vertebrata</taxon>
        <taxon>Euteleostomi</taxon>
        <taxon>Mammalia</taxon>
        <taxon>Eutheria</taxon>
        <taxon>Euarchontoglires</taxon>
        <taxon>Primates</taxon>
        <taxon>Haplorrhini</taxon>
        <taxon>Catarrhini</taxon>
        <taxon>Cercopithecidae</taxon>
        <taxon>Cercopithecinae</taxon>
        <taxon>Macaca</taxon>
    </lineage>
</organism>
<comment type="function">
    <text>Lysozymes have primarily a bacteriolytic function; those in tissues and body fluids are associated with the monocyte-macrophage system and enhance the activity of immunoagents.</text>
</comment>
<comment type="catalytic activity">
    <reaction>
        <text>Hydrolysis of (1-&gt;4)-beta-linkages between N-acetylmuramic acid and N-acetyl-D-glucosamine residues in a peptidoglycan and between N-acetyl-D-glucosamine residues in chitodextrins.</text>
        <dbReference type="EC" id="3.2.1.17"/>
    </reaction>
</comment>
<comment type="subunit">
    <text>Monomer.</text>
</comment>
<comment type="subcellular location">
    <subcellularLocation>
        <location evidence="1">Secreted</location>
    </subcellularLocation>
</comment>
<comment type="miscellaneous">
    <text>Lysozyme C is capable of both hydrolysis and transglycosylation; it also shows a slight esterase activity. It acts rapidly on both peptide-substituted and unsubstituted peptidoglycan, and slowly on chitin oligosaccharides.</text>
</comment>
<comment type="similarity">
    <text evidence="2">Belongs to the glycosyl hydrolase 22 family.</text>
</comment>
<accession>P30201</accession>
<feature type="signal peptide" evidence="1">
    <location>
        <begin position="1"/>
        <end position="18"/>
    </location>
</feature>
<feature type="chain" id="PRO_0000018470" description="Lysozyme C">
    <location>
        <begin position="19"/>
        <end position="148"/>
    </location>
</feature>
<feature type="domain" description="C-type lysozyme" evidence="2">
    <location>
        <begin position="19"/>
        <end position="148"/>
    </location>
</feature>
<feature type="active site" evidence="2">
    <location>
        <position position="53"/>
    </location>
</feature>
<feature type="active site" evidence="2">
    <location>
        <position position="71"/>
    </location>
</feature>
<feature type="disulfide bond" evidence="2">
    <location>
        <begin position="24"/>
        <end position="146"/>
    </location>
</feature>
<feature type="disulfide bond" evidence="2">
    <location>
        <begin position="48"/>
        <end position="134"/>
    </location>
</feature>
<feature type="disulfide bond" evidence="2">
    <location>
        <begin position="83"/>
        <end position="99"/>
    </location>
</feature>
<feature type="disulfide bond" evidence="2">
    <location>
        <begin position="95"/>
        <end position="113"/>
    </location>
</feature>
<gene>
    <name type="primary">LYZ</name>
</gene>
<proteinExistence type="evidence at transcript level"/>
<keyword id="KW-0929">Antimicrobial</keyword>
<keyword id="KW-0081">Bacteriolytic enzyme</keyword>
<keyword id="KW-1015">Disulfide bond</keyword>
<keyword id="KW-0326">Glycosidase</keyword>
<keyword id="KW-0378">Hydrolase</keyword>
<keyword id="KW-0494">Milk protein</keyword>
<keyword id="KW-1185">Reference proteome</keyword>
<keyword id="KW-0964">Secreted</keyword>
<keyword id="KW-0732">Signal</keyword>